<reference key="1">
    <citation type="journal article" date="2005" name="Proc. Natl. Acad. Sci. U.S.A.">
        <title>The psychrophilic lifestyle as revealed by the genome sequence of Colwellia psychrerythraea 34H through genomic and proteomic analyses.</title>
        <authorList>
            <person name="Methe B.A."/>
            <person name="Nelson K.E."/>
            <person name="Deming J.W."/>
            <person name="Momen B."/>
            <person name="Melamud E."/>
            <person name="Zhang X."/>
            <person name="Moult J."/>
            <person name="Madupu R."/>
            <person name="Nelson W.C."/>
            <person name="Dodson R.J."/>
            <person name="Brinkac L.M."/>
            <person name="Daugherty S.C."/>
            <person name="Durkin A.S."/>
            <person name="DeBoy R.T."/>
            <person name="Kolonay J.F."/>
            <person name="Sullivan S.A."/>
            <person name="Zhou L."/>
            <person name="Davidsen T.M."/>
            <person name="Wu M."/>
            <person name="Huston A.L."/>
            <person name="Lewis M."/>
            <person name="Weaver B."/>
            <person name="Weidman J.F."/>
            <person name="Khouri H."/>
            <person name="Utterback T.R."/>
            <person name="Feldblyum T.V."/>
            <person name="Fraser C.M."/>
        </authorList>
    </citation>
    <scope>NUCLEOTIDE SEQUENCE [LARGE SCALE GENOMIC DNA]</scope>
    <source>
        <strain>34H / ATCC BAA-681</strain>
    </source>
</reference>
<feature type="chain" id="PRO_0000256547" description="Trigger factor">
    <location>
        <begin position="1"/>
        <end position="435"/>
    </location>
</feature>
<feature type="domain" description="PPIase FKBP-type" evidence="1">
    <location>
        <begin position="161"/>
        <end position="246"/>
    </location>
</feature>
<protein>
    <recommendedName>
        <fullName evidence="1">Trigger factor</fullName>
        <shortName evidence="1">TF</shortName>
        <ecNumber evidence="1">5.2.1.8</ecNumber>
    </recommendedName>
    <alternativeName>
        <fullName evidence="1">PPIase</fullName>
    </alternativeName>
</protein>
<proteinExistence type="inferred from homology"/>
<sequence length="435" mass="48696">MQVSVETTQGLERRLTISVPAEKVDVEVKNRLRQISKTQRINGFRPGKVPPSVVQKRFGKSVRQEVAGEIMQRNFVDAIVAEKINPAGRPSFVAKSNEDGKALEFEATFEIYPVVELKDLEKIAIERPEVDVTDADLDEMFVTLQKQHQTWKENKRKTKSGDKLTLDFTGRVDGEEFEGGKAEGFELELGAGRMIPGFEKEVTGMKAGDEATIKVTFPEDYHAENLKGKDAEFDIVIHKTEGPILPEIDEEFAKLFGIEEGGVEALRVEVSKNMARELTQAVKAKVKTQVIDGLLAGHEVDLPSALVTQEVDVLRQQAMQRFQGQMDPKNLPQLPAEMFTEQAERRVKIGLLLGEVIKVNELKVDETKVNELIASAASAYEDPKEVIEYYANNNELMQQMQNVALEEQAVELLVEKAKVSDKKASFNEIMNPEAK</sequence>
<accession>Q47XL7</accession>
<comment type="function">
    <text evidence="1">Involved in protein export. Acts as a chaperone by maintaining the newly synthesized protein in an open conformation. Functions as a peptidyl-prolyl cis-trans isomerase.</text>
</comment>
<comment type="catalytic activity">
    <reaction evidence="1">
        <text>[protein]-peptidylproline (omega=180) = [protein]-peptidylproline (omega=0)</text>
        <dbReference type="Rhea" id="RHEA:16237"/>
        <dbReference type="Rhea" id="RHEA-COMP:10747"/>
        <dbReference type="Rhea" id="RHEA-COMP:10748"/>
        <dbReference type="ChEBI" id="CHEBI:83833"/>
        <dbReference type="ChEBI" id="CHEBI:83834"/>
        <dbReference type="EC" id="5.2.1.8"/>
    </reaction>
</comment>
<comment type="subcellular location">
    <subcellularLocation>
        <location>Cytoplasm</location>
    </subcellularLocation>
    <text evidence="1">About half TF is bound to the ribosome near the polypeptide exit tunnel while the other half is free in the cytoplasm.</text>
</comment>
<comment type="domain">
    <text evidence="1">Consists of 3 domains; the N-terminus binds the ribosome, the middle domain has PPIase activity, while the C-terminus has intrinsic chaperone activity on its own.</text>
</comment>
<comment type="similarity">
    <text evidence="1">Belongs to the FKBP-type PPIase family. Tig subfamily.</text>
</comment>
<evidence type="ECO:0000255" key="1">
    <source>
        <dbReference type="HAMAP-Rule" id="MF_00303"/>
    </source>
</evidence>
<name>TIG_COLP3</name>
<organism>
    <name type="scientific">Colwellia psychrerythraea (strain 34H / ATCC BAA-681)</name>
    <name type="common">Vibrio psychroerythus</name>
    <dbReference type="NCBI Taxonomy" id="167879"/>
    <lineage>
        <taxon>Bacteria</taxon>
        <taxon>Pseudomonadati</taxon>
        <taxon>Pseudomonadota</taxon>
        <taxon>Gammaproteobacteria</taxon>
        <taxon>Alteromonadales</taxon>
        <taxon>Colwelliaceae</taxon>
        <taxon>Colwellia</taxon>
    </lineage>
</organism>
<dbReference type="EC" id="5.2.1.8" evidence="1"/>
<dbReference type="EMBL" id="CP000083">
    <property type="protein sequence ID" value="AAZ24013.1"/>
    <property type="molecule type" value="Genomic_DNA"/>
</dbReference>
<dbReference type="RefSeq" id="WP_011044539.1">
    <property type="nucleotide sequence ID" value="NC_003910.7"/>
</dbReference>
<dbReference type="SMR" id="Q47XL7"/>
<dbReference type="STRING" id="167879.CPS_3786"/>
<dbReference type="KEGG" id="cps:CPS_3786"/>
<dbReference type="eggNOG" id="COG0544">
    <property type="taxonomic scope" value="Bacteria"/>
</dbReference>
<dbReference type="HOGENOM" id="CLU_033058_2_0_6"/>
<dbReference type="Proteomes" id="UP000000547">
    <property type="component" value="Chromosome"/>
</dbReference>
<dbReference type="GO" id="GO:0005737">
    <property type="term" value="C:cytoplasm"/>
    <property type="evidence" value="ECO:0007669"/>
    <property type="project" value="UniProtKB-SubCell"/>
</dbReference>
<dbReference type="GO" id="GO:0003755">
    <property type="term" value="F:peptidyl-prolyl cis-trans isomerase activity"/>
    <property type="evidence" value="ECO:0007669"/>
    <property type="project" value="UniProtKB-UniRule"/>
</dbReference>
<dbReference type="GO" id="GO:0044183">
    <property type="term" value="F:protein folding chaperone"/>
    <property type="evidence" value="ECO:0007669"/>
    <property type="project" value="TreeGrafter"/>
</dbReference>
<dbReference type="GO" id="GO:0043022">
    <property type="term" value="F:ribosome binding"/>
    <property type="evidence" value="ECO:0007669"/>
    <property type="project" value="TreeGrafter"/>
</dbReference>
<dbReference type="GO" id="GO:0051083">
    <property type="term" value="P:'de novo' cotranslational protein folding"/>
    <property type="evidence" value="ECO:0007669"/>
    <property type="project" value="TreeGrafter"/>
</dbReference>
<dbReference type="GO" id="GO:0051301">
    <property type="term" value="P:cell division"/>
    <property type="evidence" value="ECO:0007669"/>
    <property type="project" value="UniProtKB-KW"/>
</dbReference>
<dbReference type="GO" id="GO:0061077">
    <property type="term" value="P:chaperone-mediated protein folding"/>
    <property type="evidence" value="ECO:0007669"/>
    <property type="project" value="TreeGrafter"/>
</dbReference>
<dbReference type="GO" id="GO:0015031">
    <property type="term" value="P:protein transport"/>
    <property type="evidence" value="ECO:0007669"/>
    <property type="project" value="UniProtKB-UniRule"/>
</dbReference>
<dbReference type="GO" id="GO:0043335">
    <property type="term" value="P:protein unfolding"/>
    <property type="evidence" value="ECO:0007669"/>
    <property type="project" value="TreeGrafter"/>
</dbReference>
<dbReference type="FunFam" id="3.10.50.40:FF:000001">
    <property type="entry name" value="Trigger factor"/>
    <property type="match status" value="1"/>
</dbReference>
<dbReference type="Gene3D" id="3.10.50.40">
    <property type="match status" value="1"/>
</dbReference>
<dbReference type="Gene3D" id="3.30.70.1050">
    <property type="entry name" value="Trigger factor ribosome-binding domain"/>
    <property type="match status" value="1"/>
</dbReference>
<dbReference type="Gene3D" id="1.10.3120.10">
    <property type="entry name" value="Trigger factor, C-terminal domain"/>
    <property type="match status" value="1"/>
</dbReference>
<dbReference type="HAMAP" id="MF_00303">
    <property type="entry name" value="Trigger_factor_Tig"/>
    <property type="match status" value="1"/>
</dbReference>
<dbReference type="InterPro" id="IPR046357">
    <property type="entry name" value="PPIase_dom_sf"/>
</dbReference>
<dbReference type="InterPro" id="IPR001179">
    <property type="entry name" value="PPIase_FKBP_dom"/>
</dbReference>
<dbReference type="InterPro" id="IPR005215">
    <property type="entry name" value="Trig_fac"/>
</dbReference>
<dbReference type="InterPro" id="IPR008880">
    <property type="entry name" value="Trigger_fac_C"/>
</dbReference>
<dbReference type="InterPro" id="IPR037041">
    <property type="entry name" value="Trigger_fac_C_sf"/>
</dbReference>
<dbReference type="InterPro" id="IPR008881">
    <property type="entry name" value="Trigger_fac_ribosome-bd_bac"/>
</dbReference>
<dbReference type="InterPro" id="IPR036611">
    <property type="entry name" value="Trigger_fac_ribosome-bd_sf"/>
</dbReference>
<dbReference type="InterPro" id="IPR027304">
    <property type="entry name" value="Trigger_fact/SurA_dom_sf"/>
</dbReference>
<dbReference type="NCBIfam" id="TIGR00115">
    <property type="entry name" value="tig"/>
    <property type="match status" value="1"/>
</dbReference>
<dbReference type="PANTHER" id="PTHR30560">
    <property type="entry name" value="TRIGGER FACTOR CHAPERONE AND PEPTIDYL-PROLYL CIS/TRANS ISOMERASE"/>
    <property type="match status" value="1"/>
</dbReference>
<dbReference type="PANTHER" id="PTHR30560:SF3">
    <property type="entry name" value="TRIGGER FACTOR-LIKE PROTEIN TIG, CHLOROPLASTIC"/>
    <property type="match status" value="1"/>
</dbReference>
<dbReference type="Pfam" id="PF00254">
    <property type="entry name" value="FKBP_C"/>
    <property type="match status" value="1"/>
</dbReference>
<dbReference type="Pfam" id="PF05698">
    <property type="entry name" value="Trigger_C"/>
    <property type="match status" value="1"/>
</dbReference>
<dbReference type="Pfam" id="PF05697">
    <property type="entry name" value="Trigger_N"/>
    <property type="match status" value="1"/>
</dbReference>
<dbReference type="PIRSF" id="PIRSF003095">
    <property type="entry name" value="Trigger_factor"/>
    <property type="match status" value="1"/>
</dbReference>
<dbReference type="SUPFAM" id="SSF54534">
    <property type="entry name" value="FKBP-like"/>
    <property type="match status" value="1"/>
</dbReference>
<dbReference type="SUPFAM" id="SSF109998">
    <property type="entry name" value="Triger factor/SurA peptide-binding domain-like"/>
    <property type="match status" value="1"/>
</dbReference>
<dbReference type="SUPFAM" id="SSF102735">
    <property type="entry name" value="Trigger factor ribosome-binding domain"/>
    <property type="match status" value="1"/>
</dbReference>
<dbReference type="PROSITE" id="PS50059">
    <property type="entry name" value="FKBP_PPIASE"/>
    <property type="match status" value="1"/>
</dbReference>
<keyword id="KW-0131">Cell cycle</keyword>
<keyword id="KW-0132">Cell division</keyword>
<keyword id="KW-0143">Chaperone</keyword>
<keyword id="KW-0963">Cytoplasm</keyword>
<keyword id="KW-0413">Isomerase</keyword>
<keyword id="KW-0697">Rotamase</keyword>
<gene>
    <name evidence="1" type="primary">tig</name>
    <name type="ordered locus">CPS_3786</name>
</gene>